<gene>
    <name type="primary">Rfc2</name>
</gene>
<dbReference type="EMBL" id="AF139987">
    <property type="protein sequence ID" value="AAD34861.1"/>
    <property type="molecule type" value="Genomic_DNA"/>
</dbReference>
<dbReference type="EMBL" id="AF289664">
    <property type="protein sequence ID" value="AAF99332.1"/>
    <property type="molecule type" value="Genomic_DNA"/>
</dbReference>
<dbReference type="EMBL" id="AK075997">
    <property type="protein sequence ID" value="BAC36108.1"/>
    <property type="molecule type" value="mRNA"/>
</dbReference>
<dbReference type="EMBL" id="BC023028">
    <property type="protein sequence ID" value="AAH23028.1"/>
    <property type="molecule type" value="mRNA"/>
</dbReference>
<dbReference type="CCDS" id="CCDS19722.1"/>
<dbReference type="RefSeq" id="NP_064406.1">
    <property type="nucleotide sequence ID" value="NM_020022.2"/>
</dbReference>
<dbReference type="SMR" id="Q9WUK4"/>
<dbReference type="BioGRID" id="202869">
    <property type="interactions" value="9"/>
</dbReference>
<dbReference type="ComplexPortal" id="CPX-472">
    <property type="entry name" value="DNA replication factor C complex"/>
</dbReference>
<dbReference type="CORUM" id="Q9WUK4"/>
<dbReference type="FunCoup" id="Q9WUK4">
    <property type="interactions" value="2763"/>
</dbReference>
<dbReference type="IntAct" id="Q9WUK4">
    <property type="interactions" value="2"/>
</dbReference>
<dbReference type="STRING" id="10090.ENSMUSP00000023867"/>
<dbReference type="iPTMnet" id="Q9WUK4"/>
<dbReference type="PhosphoSitePlus" id="Q9WUK4"/>
<dbReference type="SwissPalm" id="Q9WUK4"/>
<dbReference type="PaxDb" id="10090-ENSMUSP00000023867"/>
<dbReference type="ProteomicsDB" id="255292"/>
<dbReference type="Pumba" id="Q9WUK4"/>
<dbReference type="Antibodypedia" id="14601">
    <property type="antibodies" value="514 antibodies from 34 providers"/>
</dbReference>
<dbReference type="DNASU" id="19718"/>
<dbReference type="Ensembl" id="ENSMUST00000023867.8">
    <property type="protein sequence ID" value="ENSMUSP00000023867.7"/>
    <property type="gene ID" value="ENSMUSG00000023104.10"/>
</dbReference>
<dbReference type="GeneID" id="19718"/>
<dbReference type="KEGG" id="mmu:19718"/>
<dbReference type="UCSC" id="uc008zwl.1">
    <property type="organism name" value="mouse"/>
</dbReference>
<dbReference type="AGR" id="MGI:1341868"/>
<dbReference type="CTD" id="5982"/>
<dbReference type="MGI" id="MGI:1341868">
    <property type="gene designation" value="Rfc2"/>
</dbReference>
<dbReference type="VEuPathDB" id="HostDB:ENSMUSG00000023104"/>
<dbReference type="eggNOG" id="KOG0991">
    <property type="taxonomic scope" value="Eukaryota"/>
</dbReference>
<dbReference type="GeneTree" id="ENSGT00550000075050"/>
<dbReference type="HOGENOM" id="CLU_042324_0_1_1"/>
<dbReference type="InParanoid" id="Q9WUK4"/>
<dbReference type="OMA" id="SCNYSSQ"/>
<dbReference type="OrthoDB" id="4199794at2759"/>
<dbReference type="PhylomeDB" id="Q9WUK4"/>
<dbReference type="TreeFam" id="TF300585"/>
<dbReference type="Reactome" id="R-MMU-110312">
    <property type="pathway name" value="Translesion synthesis by REV1"/>
</dbReference>
<dbReference type="Reactome" id="R-MMU-110314">
    <property type="pathway name" value="Recognition of DNA damage by PCNA-containing replication complex"/>
</dbReference>
<dbReference type="Reactome" id="R-MMU-110320">
    <property type="pathway name" value="Translesion Synthesis by POLH"/>
</dbReference>
<dbReference type="Reactome" id="R-MMU-174411">
    <property type="pathway name" value="Polymerase switching on the C-strand of the telomere"/>
</dbReference>
<dbReference type="Reactome" id="R-MMU-176187">
    <property type="pathway name" value="Activation of ATR in response to replication stress"/>
</dbReference>
<dbReference type="Reactome" id="R-MMU-5651801">
    <property type="pathway name" value="PCNA-Dependent Long Patch Base Excision Repair"/>
</dbReference>
<dbReference type="Reactome" id="R-MMU-5655862">
    <property type="pathway name" value="Translesion synthesis by POLK"/>
</dbReference>
<dbReference type="Reactome" id="R-MMU-5656121">
    <property type="pathway name" value="Translesion synthesis by POLI"/>
</dbReference>
<dbReference type="Reactome" id="R-MMU-5656169">
    <property type="pathway name" value="Termination of translesion DNA synthesis"/>
</dbReference>
<dbReference type="Reactome" id="R-MMU-5685938">
    <property type="pathway name" value="HDR through Single Strand Annealing (SSA)"/>
</dbReference>
<dbReference type="Reactome" id="R-MMU-5685942">
    <property type="pathway name" value="HDR through Homologous Recombination (HRR)"/>
</dbReference>
<dbReference type="Reactome" id="R-MMU-5693607">
    <property type="pathway name" value="Processing of DNA double-strand break ends"/>
</dbReference>
<dbReference type="Reactome" id="R-MMU-5696397">
    <property type="pathway name" value="Gap-filling DNA repair synthesis and ligation in GG-NER"/>
</dbReference>
<dbReference type="Reactome" id="R-MMU-5696400">
    <property type="pathway name" value="Dual Incision in GG-NER"/>
</dbReference>
<dbReference type="Reactome" id="R-MMU-6782135">
    <property type="pathway name" value="Dual incision in TC-NER"/>
</dbReference>
<dbReference type="Reactome" id="R-MMU-6782210">
    <property type="pathway name" value="Gap-filling DNA repair synthesis and ligation in TC-NER"/>
</dbReference>
<dbReference type="Reactome" id="R-MMU-6804756">
    <property type="pathway name" value="Regulation of TP53 Activity through Phosphorylation"/>
</dbReference>
<dbReference type="Reactome" id="R-MMU-69091">
    <property type="pathway name" value="Polymerase switching"/>
</dbReference>
<dbReference type="Reactome" id="R-MMU-69473">
    <property type="pathway name" value="G2/M DNA damage checkpoint"/>
</dbReference>
<dbReference type="BioGRID-ORCS" id="19718">
    <property type="hits" value="25 hits in 78 CRISPR screens"/>
</dbReference>
<dbReference type="ChiTaRS" id="Rfc2">
    <property type="organism name" value="mouse"/>
</dbReference>
<dbReference type="PRO" id="PR:Q9WUK4"/>
<dbReference type="Proteomes" id="UP000000589">
    <property type="component" value="Chromosome 5"/>
</dbReference>
<dbReference type="RNAct" id="Q9WUK4">
    <property type="molecule type" value="protein"/>
</dbReference>
<dbReference type="Bgee" id="ENSMUSG00000023104">
    <property type="expression patterns" value="Expressed in spermatid and 260 other cell types or tissues"/>
</dbReference>
<dbReference type="ExpressionAtlas" id="Q9WUK4">
    <property type="expression patterns" value="baseline and differential"/>
</dbReference>
<dbReference type="GO" id="GO:0031390">
    <property type="term" value="C:Ctf18 RFC-like complex"/>
    <property type="evidence" value="ECO:0000250"/>
    <property type="project" value="UniProtKB"/>
</dbReference>
<dbReference type="GO" id="GO:0005663">
    <property type="term" value="C:DNA replication factor C complex"/>
    <property type="evidence" value="ECO:0000266"/>
    <property type="project" value="ComplexPortal"/>
</dbReference>
<dbReference type="GO" id="GO:0005524">
    <property type="term" value="F:ATP binding"/>
    <property type="evidence" value="ECO:0007669"/>
    <property type="project" value="UniProtKB-KW"/>
</dbReference>
<dbReference type="GO" id="GO:0016887">
    <property type="term" value="F:ATP hydrolysis activity"/>
    <property type="evidence" value="ECO:0007669"/>
    <property type="project" value="InterPro"/>
</dbReference>
<dbReference type="GO" id="GO:0003677">
    <property type="term" value="F:DNA binding"/>
    <property type="evidence" value="ECO:0007669"/>
    <property type="project" value="InterPro"/>
</dbReference>
<dbReference type="GO" id="GO:0003689">
    <property type="term" value="F:DNA clamp loader activity"/>
    <property type="evidence" value="ECO:0007669"/>
    <property type="project" value="Ensembl"/>
</dbReference>
<dbReference type="GO" id="GO:0019899">
    <property type="term" value="F:enzyme binding"/>
    <property type="evidence" value="ECO:0000353"/>
    <property type="project" value="BHF-UCL"/>
</dbReference>
<dbReference type="GO" id="GO:0017116">
    <property type="term" value="F:single-stranded DNA helicase activity"/>
    <property type="evidence" value="ECO:0007669"/>
    <property type="project" value="Ensembl"/>
</dbReference>
<dbReference type="GO" id="GO:0006261">
    <property type="term" value="P:DNA-templated DNA replication"/>
    <property type="evidence" value="ECO:0000266"/>
    <property type="project" value="ComplexPortal"/>
</dbReference>
<dbReference type="GO" id="GO:1900264">
    <property type="term" value="P:positive regulation of DNA-directed DNA polymerase activity"/>
    <property type="evidence" value="ECO:0000250"/>
    <property type="project" value="UniProtKB"/>
</dbReference>
<dbReference type="CDD" id="cd00009">
    <property type="entry name" value="AAA"/>
    <property type="match status" value="1"/>
</dbReference>
<dbReference type="CDD" id="cd18140">
    <property type="entry name" value="HLD_clamp_RFC"/>
    <property type="match status" value="1"/>
</dbReference>
<dbReference type="FunFam" id="1.20.272.10:FF:000006">
    <property type="entry name" value="Replication factor C subunit 2"/>
    <property type="match status" value="1"/>
</dbReference>
<dbReference type="FunFam" id="1.10.8.60:FF:000012">
    <property type="entry name" value="Replication factor C subunit 4"/>
    <property type="match status" value="1"/>
</dbReference>
<dbReference type="FunFam" id="3.40.50.300:FF:000107">
    <property type="entry name" value="Replication factor C subunit 4"/>
    <property type="match status" value="1"/>
</dbReference>
<dbReference type="Gene3D" id="1.10.8.60">
    <property type="match status" value="1"/>
</dbReference>
<dbReference type="Gene3D" id="1.20.272.10">
    <property type="match status" value="1"/>
</dbReference>
<dbReference type="Gene3D" id="3.40.50.300">
    <property type="entry name" value="P-loop containing nucleotide triphosphate hydrolases"/>
    <property type="match status" value="1"/>
</dbReference>
<dbReference type="InterPro" id="IPR003593">
    <property type="entry name" value="AAA+_ATPase"/>
</dbReference>
<dbReference type="InterPro" id="IPR003959">
    <property type="entry name" value="ATPase_AAA_core"/>
</dbReference>
<dbReference type="InterPro" id="IPR008921">
    <property type="entry name" value="DNA_pol3_clamp-load_cplx_C"/>
</dbReference>
<dbReference type="InterPro" id="IPR050238">
    <property type="entry name" value="DNA_Rep/Repair_Clamp_Loader"/>
</dbReference>
<dbReference type="InterPro" id="IPR027417">
    <property type="entry name" value="P-loop_NTPase"/>
</dbReference>
<dbReference type="InterPro" id="IPR013748">
    <property type="entry name" value="Rep_factorC_C"/>
</dbReference>
<dbReference type="InterPro" id="IPR047854">
    <property type="entry name" value="RFC_lid"/>
</dbReference>
<dbReference type="NCBIfam" id="NF001679">
    <property type="entry name" value="PRK00440.1"/>
    <property type="match status" value="1"/>
</dbReference>
<dbReference type="PANTHER" id="PTHR11669">
    <property type="entry name" value="REPLICATION FACTOR C / DNA POLYMERASE III GAMMA-TAU SUBUNIT"/>
    <property type="match status" value="1"/>
</dbReference>
<dbReference type="PANTHER" id="PTHR11669:SF5">
    <property type="entry name" value="REPLICATION FACTOR C SUBUNIT 2"/>
    <property type="match status" value="1"/>
</dbReference>
<dbReference type="Pfam" id="PF00004">
    <property type="entry name" value="AAA"/>
    <property type="match status" value="1"/>
</dbReference>
<dbReference type="Pfam" id="PF08542">
    <property type="entry name" value="Rep_fac_C"/>
    <property type="match status" value="1"/>
</dbReference>
<dbReference type="SMART" id="SM00382">
    <property type="entry name" value="AAA"/>
    <property type="match status" value="1"/>
</dbReference>
<dbReference type="SUPFAM" id="SSF52540">
    <property type="entry name" value="P-loop containing nucleoside triphosphate hydrolases"/>
    <property type="match status" value="1"/>
</dbReference>
<dbReference type="SUPFAM" id="SSF48019">
    <property type="entry name" value="post-AAA+ oligomerization domain-like"/>
    <property type="match status" value="1"/>
</dbReference>
<sequence length="349" mass="38725">MEVQESGCDPSESGAQEPSPVPSKTAGHYELPWVEKYRPLKLNEIVGNEDTVSRLEVFAREGNVPNIIIAGPPGTGKTTSILCLARALLGPALKDAVLELNASNDRGIDVVRNKIKMFAQQKVTLPKGRHKIIILDEADSMTDGAQQALRRTMEIYSKTTRFALACNASDKIIEPIQSRCAVLRYTKLTDAQVLTRLMNVIEKEKVPYTDDGLEAIIFTAQGDMRQALNNLQSTFSGFGYINSENVFKVCDEPHPLLVKEMIQHCVDANIDEAYKILAHLWHLGYSPEDVIGNIFRVCKTFPMAEYLKLEFIKEIGYTHMKVAEGVNSLLQMAGLLARLCQKTMAPVAS</sequence>
<comment type="function">
    <text evidence="1">Subunit of the replication factor C (RFC) complex which acts during elongation of primed DNA templates by DNA polymerases delta and epsilon, and is necessary for ATP-dependent loading of proliferating cell nuclear antigen (PCNA) onto primed DNA (By similarity). This subunit binds ATP (By similarity).</text>
</comment>
<comment type="subunit">
    <text evidence="1">Subunit of the RFC complex, an heteropentameric complex consisting of a large subunit RFC1 and four small subunits RFC2, RFC3, RFC4 and RFC5; the RFC complex interacts with PCNA. Forms an heterotetrameric complex with RFC3, RFC4 and RFC5; this complex has ATPase activity but is not stimulated by PCNA. The heterotetramer of subunits RFC2, RFC3, RFC4 and RFC5 interacts with RAD17. RFC2 also interacts with PRKAR1A; the complex may be involved in cell survival. Interacts with DDX11.</text>
</comment>
<comment type="subcellular location">
    <subcellularLocation>
        <location evidence="4">Nucleus</location>
    </subcellularLocation>
</comment>
<comment type="similarity">
    <text evidence="4">Belongs to the activator 1 small subunits family.</text>
</comment>
<feature type="chain" id="PRO_0000121767" description="Replication factor C subunit 2">
    <location>
        <begin position="1"/>
        <end position="349"/>
    </location>
</feature>
<feature type="region of interest" description="Disordered" evidence="3">
    <location>
        <begin position="1"/>
        <end position="27"/>
    </location>
</feature>
<feature type="binding site" evidence="2">
    <location>
        <begin position="71"/>
        <end position="78"/>
    </location>
    <ligand>
        <name>ATP</name>
        <dbReference type="ChEBI" id="CHEBI:30616"/>
    </ligand>
</feature>
<feature type="modified residue" description="N-acetylmethionine" evidence="1">
    <location>
        <position position="1"/>
    </location>
</feature>
<feature type="modified residue" description="N6-acetyllysine" evidence="1">
    <location>
        <position position="158"/>
    </location>
</feature>
<feature type="modified residue" description="N6-acetyllysine" evidence="1">
    <location>
        <position position="299"/>
    </location>
</feature>
<accession>Q9WUK4</accession>
<reference key="1">
    <citation type="journal article" date="2000" name="Mamm. Genome">
        <title>Comparative genomic sequence analysis of the Williams syndrome region (LIMK1-RFC2) of human chromosome 7q11.23.</title>
        <authorList>
            <person name="Martindale D.W."/>
            <person name="Wilson M.D."/>
            <person name="Wang D."/>
            <person name="Burke R.D."/>
            <person name="Chen X."/>
            <person name="Duronio V."/>
            <person name="Koop B.F."/>
        </authorList>
    </citation>
    <scope>NUCLEOTIDE SEQUENCE [GENOMIC DNA]</scope>
    <source>
        <strain>129/SvJ</strain>
    </source>
</reference>
<reference key="2">
    <citation type="submission" date="2000-07" db="EMBL/GenBank/DDBJ databases">
        <authorList>
            <person name="Green E.D."/>
        </authorList>
    </citation>
    <scope>NUCLEOTIDE SEQUENCE [GENOMIC DNA]</scope>
    <source>
        <strain>129/Sv</strain>
    </source>
</reference>
<reference key="3">
    <citation type="journal article" date="2005" name="Science">
        <title>The transcriptional landscape of the mammalian genome.</title>
        <authorList>
            <person name="Carninci P."/>
            <person name="Kasukawa T."/>
            <person name="Katayama S."/>
            <person name="Gough J."/>
            <person name="Frith M.C."/>
            <person name="Maeda N."/>
            <person name="Oyama R."/>
            <person name="Ravasi T."/>
            <person name="Lenhard B."/>
            <person name="Wells C."/>
            <person name="Kodzius R."/>
            <person name="Shimokawa K."/>
            <person name="Bajic V.B."/>
            <person name="Brenner S.E."/>
            <person name="Batalov S."/>
            <person name="Forrest A.R."/>
            <person name="Zavolan M."/>
            <person name="Davis M.J."/>
            <person name="Wilming L.G."/>
            <person name="Aidinis V."/>
            <person name="Allen J.E."/>
            <person name="Ambesi-Impiombato A."/>
            <person name="Apweiler R."/>
            <person name="Aturaliya R.N."/>
            <person name="Bailey T.L."/>
            <person name="Bansal M."/>
            <person name="Baxter L."/>
            <person name="Beisel K.W."/>
            <person name="Bersano T."/>
            <person name="Bono H."/>
            <person name="Chalk A.M."/>
            <person name="Chiu K.P."/>
            <person name="Choudhary V."/>
            <person name="Christoffels A."/>
            <person name="Clutterbuck D.R."/>
            <person name="Crowe M.L."/>
            <person name="Dalla E."/>
            <person name="Dalrymple B.P."/>
            <person name="de Bono B."/>
            <person name="Della Gatta G."/>
            <person name="di Bernardo D."/>
            <person name="Down T."/>
            <person name="Engstrom P."/>
            <person name="Fagiolini M."/>
            <person name="Faulkner G."/>
            <person name="Fletcher C.F."/>
            <person name="Fukushima T."/>
            <person name="Furuno M."/>
            <person name="Futaki S."/>
            <person name="Gariboldi M."/>
            <person name="Georgii-Hemming P."/>
            <person name="Gingeras T.R."/>
            <person name="Gojobori T."/>
            <person name="Green R.E."/>
            <person name="Gustincich S."/>
            <person name="Harbers M."/>
            <person name="Hayashi Y."/>
            <person name="Hensch T.K."/>
            <person name="Hirokawa N."/>
            <person name="Hill D."/>
            <person name="Huminiecki L."/>
            <person name="Iacono M."/>
            <person name="Ikeo K."/>
            <person name="Iwama A."/>
            <person name="Ishikawa T."/>
            <person name="Jakt M."/>
            <person name="Kanapin A."/>
            <person name="Katoh M."/>
            <person name="Kawasawa Y."/>
            <person name="Kelso J."/>
            <person name="Kitamura H."/>
            <person name="Kitano H."/>
            <person name="Kollias G."/>
            <person name="Krishnan S.P."/>
            <person name="Kruger A."/>
            <person name="Kummerfeld S.K."/>
            <person name="Kurochkin I.V."/>
            <person name="Lareau L.F."/>
            <person name="Lazarevic D."/>
            <person name="Lipovich L."/>
            <person name="Liu J."/>
            <person name="Liuni S."/>
            <person name="McWilliam S."/>
            <person name="Madan Babu M."/>
            <person name="Madera M."/>
            <person name="Marchionni L."/>
            <person name="Matsuda H."/>
            <person name="Matsuzawa S."/>
            <person name="Miki H."/>
            <person name="Mignone F."/>
            <person name="Miyake S."/>
            <person name="Morris K."/>
            <person name="Mottagui-Tabar S."/>
            <person name="Mulder N."/>
            <person name="Nakano N."/>
            <person name="Nakauchi H."/>
            <person name="Ng P."/>
            <person name="Nilsson R."/>
            <person name="Nishiguchi S."/>
            <person name="Nishikawa S."/>
            <person name="Nori F."/>
            <person name="Ohara O."/>
            <person name="Okazaki Y."/>
            <person name="Orlando V."/>
            <person name="Pang K.C."/>
            <person name="Pavan W.J."/>
            <person name="Pavesi G."/>
            <person name="Pesole G."/>
            <person name="Petrovsky N."/>
            <person name="Piazza S."/>
            <person name="Reed J."/>
            <person name="Reid J.F."/>
            <person name="Ring B.Z."/>
            <person name="Ringwald M."/>
            <person name="Rost B."/>
            <person name="Ruan Y."/>
            <person name="Salzberg S.L."/>
            <person name="Sandelin A."/>
            <person name="Schneider C."/>
            <person name="Schoenbach C."/>
            <person name="Sekiguchi K."/>
            <person name="Semple C.A."/>
            <person name="Seno S."/>
            <person name="Sessa L."/>
            <person name="Sheng Y."/>
            <person name="Shibata Y."/>
            <person name="Shimada H."/>
            <person name="Shimada K."/>
            <person name="Silva D."/>
            <person name="Sinclair B."/>
            <person name="Sperling S."/>
            <person name="Stupka E."/>
            <person name="Sugiura K."/>
            <person name="Sultana R."/>
            <person name="Takenaka Y."/>
            <person name="Taki K."/>
            <person name="Tammoja K."/>
            <person name="Tan S.L."/>
            <person name="Tang S."/>
            <person name="Taylor M.S."/>
            <person name="Tegner J."/>
            <person name="Teichmann S.A."/>
            <person name="Ueda H.R."/>
            <person name="van Nimwegen E."/>
            <person name="Verardo R."/>
            <person name="Wei C.L."/>
            <person name="Yagi K."/>
            <person name="Yamanishi H."/>
            <person name="Zabarovsky E."/>
            <person name="Zhu S."/>
            <person name="Zimmer A."/>
            <person name="Hide W."/>
            <person name="Bult C."/>
            <person name="Grimmond S.M."/>
            <person name="Teasdale R.D."/>
            <person name="Liu E.T."/>
            <person name="Brusic V."/>
            <person name="Quackenbush J."/>
            <person name="Wahlestedt C."/>
            <person name="Mattick J.S."/>
            <person name="Hume D.A."/>
            <person name="Kai C."/>
            <person name="Sasaki D."/>
            <person name="Tomaru Y."/>
            <person name="Fukuda S."/>
            <person name="Kanamori-Katayama M."/>
            <person name="Suzuki M."/>
            <person name="Aoki J."/>
            <person name="Arakawa T."/>
            <person name="Iida J."/>
            <person name="Imamura K."/>
            <person name="Itoh M."/>
            <person name="Kato T."/>
            <person name="Kawaji H."/>
            <person name="Kawagashira N."/>
            <person name="Kawashima T."/>
            <person name="Kojima M."/>
            <person name="Kondo S."/>
            <person name="Konno H."/>
            <person name="Nakano K."/>
            <person name="Ninomiya N."/>
            <person name="Nishio T."/>
            <person name="Okada M."/>
            <person name="Plessy C."/>
            <person name="Shibata K."/>
            <person name="Shiraki T."/>
            <person name="Suzuki S."/>
            <person name="Tagami M."/>
            <person name="Waki K."/>
            <person name="Watahiki A."/>
            <person name="Okamura-Oho Y."/>
            <person name="Suzuki H."/>
            <person name="Kawai J."/>
            <person name="Hayashizaki Y."/>
        </authorList>
    </citation>
    <scope>NUCLEOTIDE SEQUENCE [LARGE SCALE MRNA]</scope>
    <source>
        <strain>C57BL/6J</strain>
    </source>
</reference>
<reference key="4">
    <citation type="journal article" date="2004" name="Genome Res.">
        <title>The status, quality, and expansion of the NIH full-length cDNA project: the Mammalian Gene Collection (MGC).</title>
        <authorList>
            <consortium name="The MGC Project Team"/>
        </authorList>
    </citation>
    <scope>NUCLEOTIDE SEQUENCE [LARGE SCALE MRNA]</scope>
</reference>
<reference key="5">
    <citation type="journal article" date="2010" name="Cell">
        <title>A tissue-specific atlas of mouse protein phosphorylation and expression.</title>
        <authorList>
            <person name="Huttlin E.L."/>
            <person name="Jedrychowski M.P."/>
            <person name="Elias J.E."/>
            <person name="Goswami T."/>
            <person name="Rad R."/>
            <person name="Beausoleil S.A."/>
            <person name="Villen J."/>
            <person name="Haas W."/>
            <person name="Sowa M.E."/>
            <person name="Gygi S.P."/>
        </authorList>
    </citation>
    <scope>IDENTIFICATION BY MASS SPECTROMETRY [LARGE SCALE ANALYSIS]</scope>
    <source>
        <tissue>Spleen</tissue>
    </source>
</reference>
<keyword id="KW-0007">Acetylation</keyword>
<keyword id="KW-0067">ATP-binding</keyword>
<keyword id="KW-0235">DNA replication</keyword>
<keyword id="KW-0547">Nucleotide-binding</keyword>
<keyword id="KW-0539">Nucleus</keyword>
<keyword id="KW-1185">Reference proteome</keyword>
<protein>
    <recommendedName>
        <fullName>Replication factor C subunit 2</fullName>
    </recommendedName>
    <alternativeName>
        <fullName>Activator 1 40 kDa subunit</fullName>
        <shortName>A1 40 kDa subunit</shortName>
    </alternativeName>
    <alternativeName>
        <fullName>Activator 1 subunit 2</fullName>
    </alternativeName>
    <alternativeName>
        <fullName>Replication factor C 40 kDa subunit</fullName>
        <shortName>RF-C 40 kDa subunit</shortName>
        <shortName>RFC40</shortName>
    </alternativeName>
</protein>
<name>RFC2_MOUSE</name>
<organism>
    <name type="scientific">Mus musculus</name>
    <name type="common">Mouse</name>
    <dbReference type="NCBI Taxonomy" id="10090"/>
    <lineage>
        <taxon>Eukaryota</taxon>
        <taxon>Metazoa</taxon>
        <taxon>Chordata</taxon>
        <taxon>Craniata</taxon>
        <taxon>Vertebrata</taxon>
        <taxon>Euteleostomi</taxon>
        <taxon>Mammalia</taxon>
        <taxon>Eutheria</taxon>
        <taxon>Euarchontoglires</taxon>
        <taxon>Glires</taxon>
        <taxon>Rodentia</taxon>
        <taxon>Myomorpha</taxon>
        <taxon>Muroidea</taxon>
        <taxon>Muridae</taxon>
        <taxon>Murinae</taxon>
        <taxon>Mus</taxon>
        <taxon>Mus</taxon>
    </lineage>
</organism>
<evidence type="ECO:0000250" key="1">
    <source>
        <dbReference type="UniProtKB" id="P35250"/>
    </source>
</evidence>
<evidence type="ECO:0000255" key="2"/>
<evidence type="ECO:0000256" key="3">
    <source>
        <dbReference type="SAM" id="MobiDB-lite"/>
    </source>
</evidence>
<evidence type="ECO:0000305" key="4"/>
<proteinExistence type="evidence at protein level"/>